<comment type="function">
    <text evidence="1">Binds calcium ions. May play a role in sequestering additional small ligands.</text>
</comment>
<comment type="subunit">
    <text evidence="1">Homododecamer; 12 subunits assemble to form a hollow sphere with a diameter of about 75 Angstroms. Calcium ions are bound at the interface between three subunits.</text>
</comment>
<comment type="similarity">
    <text evidence="2">Belongs to the dodecin family.</text>
</comment>
<comment type="caution">
    <text evidence="2">Dodecin family members from different organisms have non-identical ligand binding specificity.</text>
</comment>
<organism>
    <name type="scientific">Mycobacterium tuberculosis (strain ATCC 25618 / H37Rv)</name>
    <dbReference type="NCBI Taxonomy" id="83332"/>
    <lineage>
        <taxon>Bacteria</taxon>
        <taxon>Bacillati</taxon>
        <taxon>Actinomycetota</taxon>
        <taxon>Actinomycetes</taxon>
        <taxon>Mycobacteriales</taxon>
        <taxon>Mycobacteriaceae</taxon>
        <taxon>Mycobacterium</taxon>
        <taxon>Mycobacterium tuberculosis complex</taxon>
    </lineage>
</organism>
<evidence type="ECO:0000269" key="1">
    <source>
    </source>
</evidence>
<evidence type="ECO:0000305" key="2"/>
<evidence type="ECO:0007829" key="3">
    <source>
        <dbReference type="PDB" id="3ONR"/>
    </source>
</evidence>
<sequence length="71" mass="7966">MSVYKVIDIIGTSPTSWEQAAAEAVQRARDSVDDIRVARVIEQDMAVDSAGKITYRIKLEVSFKMRPAQPR</sequence>
<proteinExistence type="evidence at protein level"/>
<dbReference type="EMBL" id="AL123456">
    <property type="protein sequence ID" value="CCP43109.1"/>
    <property type="molecule type" value="Genomic_DNA"/>
</dbReference>
<dbReference type="EMBL" id="CP003248">
    <property type="protein sequence ID" value="AFN48234.1"/>
    <property type="molecule type" value="Genomic_DNA"/>
</dbReference>
<dbReference type="RefSeq" id="WP_003401885.1">
    <property type="nucleotide sequence ID" value="NZ_NVQJ01000002.1"/>
</dbReference>
<dbReference type="RefSeq" id="YP_177722.1">
    <property type="nucleotide sequence ID" value="NC_000962.3"/>
</dbReference>
<dbReference type="PDB" id="3ONR">
    <property type="method" value="X-ray"/>
    <property type="resolution" value="1.80 A"/>
    <property type="chains" value="A/B/C/D/E/F/G/H/I/J/K/L=1-71"/>
</dbReference>
<dbReference type="PDBsum" id="3ONR"/>
<dbReference type="SMR" id="Q6MX43"/>
<dbReference type="STRING" id="83332.Rv0379"/>
<dbReference type="PaxDb" id="83332-Rv0379"/>
<dbReference type="DNASU" id="886449"/>
<dbReference type="GeneID" id="45424345"/>
<dbReference type="GeneID" id="886449"/>
<dbReference type="KEGG" id="mtu:Rv0379"/>
<dbReference type="KEGG" id="mtv:RVBD_0379"/>
<dbReference type="TubercuList" id="Rv0379"/>
<dbReference type="eggNOG" id="COG3360">
    <property type="taxonomic scope" value="Bacteria"/>
</dbReference>
<dbReference type="InParanoid" id="Q6MX43"/>
<dbReference type="OrthoDB" id="5244347at2"/>
<dbReference type="EvolutionaryTrace" id="Q6MX43"/>
<dbReference type="Proteomes" id="UP000001584">
    <property type="component" value="Chromosome"/>
</dbReference>
<dbReference type="GO" id="GO:0009274">
    <property type="term" value="C:peptidoglycan-based cell wall"/>
    <property type="evidence" value="ECO:0007005"/>
    <property type="project" value="MTBBASE"/>
</dbReference>
<dbReference type="GO" id="GO:0005886">
    <property type="term" value="C:plasma membrane"/>
    <property type="evidence" value="ECO:0007005"/>
    <property type="project" value="MTBBASE"/>
</dbReference>
<dbReference type="GO" id="GO:0046872">
    <property type="term" value="F:metal ion binding"/>
    <property type="evidence" value="ECO:0007669"/>
    <property type="project" value="UniProtKB-KW"/>
</dbReference>
<dbReference type="FunFam" id="3.30.1660.10:FF:000004">
    <property type="entry name" value="Calcium dodecin"/>
    <property type="match status" value="1"/>
</dbReference>
<dbReference type="Gene3D" id="3.30.1660.10">
    <property type="entry name" value="Flavin-binding protein dodecin"/>
    <property type="match status" value="1"/>
</dbReference>
<dbReference type="InterPro" id="IPR009923">
    <property type="entry name" value="Dodecin"/>
</dbReference>
<dbReference type="InterPro" id="IPR025543">
    <property type="entry name" value="Dodecin-like"/>
</dbReference>
<dbReference type="InterPro" id="IPR036694">
    <property type="entry name" value="Dodecin-like_sf"/>
</dbReference>
<dbReference type="PANTHER" id="PTHR39324">
    <property type="entry name" value="CALCIUM DODECIN"/>
    <property type="match status" value="1"/>
</dbReference>
<dbReference type="PANTHER" id="PTHR39324:SF1">
    <property type="entry name" value="CALCIUM DODECIN"/>
    <property type="match status" value="1"/>
</dbReference>
<dbReference type="Pfam" id="PF07311">
    <property type="entry name" value="Dodecin"/>
    <property type="match status" value="1"/>
</dbReference>
<dbReference type="SUPFAM" id="SSF89807">
    <property type="entry name" value="Dodecin-like"/>
    <property type="match status" value="1"/>
</dbReference>
<keyword id="KW-0002">3D-structure</keyword>
<keyword id="KW-0106">Calcium</keyword>
<keyword id="KW-0479">Metal-binding</keyword>
<keyword id="KW-1185">Reference proteome</keyword>
<feature type="chain" id="PRO_0000429121" description="Calcium dodecin">
    <location>
        <begin position="1"/>
        <end position="71"/>
    </location>
</feature>
<feature type="binding site">
    <location>
        <position position="18"/>
    </location>
    <ligand>
        <name>Ca(2+)</name>
        <dbReference type="ChEBI" id="CHEBI:29108"/>
        <note>ligand shared between two neighboring subunits</note>
    </ligand>
</feature>
<feature type="strand" evidence="3">
    <location>
        <begin position="3"/>
        <end position="15"/>
    </location>
</feature>
<feature type="helix" evidence="3">
    <location>
        <begin position="17"/>
        <end position="31"/>
    </location>
</feature>
<feature type="strand" evidence="3">
    <location>
        <begin position="37"/>
        <end position="47"/>
    </location>
</feature>
<feature type="strand" evidence="3">
    <location>
        <begin position="53"/>
        <end position="64"/>
    </location>
</feature>
<accession>Q6MX43</accession>
<accession>F2GN66</accession>
<accession>I6X919</accession>
<reference key="1">
    <citation type="journal article" date="1998" name="Nature">
        <title>Deciphering the biology of Mycobacterium tuberculosis from the complete genome sequence.</title>
        <authorList>
            <person name="Cole S.T."/>
            <person name="Brosch R."/>
            <person name="Parkhill J."/>
            <person name="Garnier T."/>
            <person name="Churcher C.M."/>
            <person name="Harris D.E."/>
            <person name="Gordon S.V."/>
            <person name="Eiglmeier K."/>
            <person name="Gas S."/>
            <person name="Barry C.E. III"/>
            <person name="Tekaia F."/>
            <person name="Badcock K."/>
            <person name="Basham D."/>
            <person name="Brown D."/>
            <person name="Chillingworth T."/>
            <person name="Connor R."/>
            <person name="Davies R.M."/>
            <person name="Devlin K."/>
            <person name="Feltwell T."/>
            <person name="Gentles S."/>
            <person name="Hamlin N."/>
            <person name="Holroyd S."/>
            <person name="Hornsby T."/>
            <person name="Jagels K."/>
            <person name="Krogh A."/>
            <person name="McLean J."/>
            <person name="Moule S."/>
            <person name="Murphy L.D."/>
            <person name="Oliver S."/>
            <person name="Osborne J."/>
            <person name="Quail M.A."/>
            <person name="Rajandream M.A."/>
            <person name="Rogers J."/>
            <person name="Rutter S."/>
            <person name="Seeger K."/>
            <person name="Skelton S."/>
            <person name="Squares S."/>
            <person name="Squares R."/>
            <person name="Sulston J.E."/>
            <person name="Taylor K."/>
            <person name="Whitehead S."/>
            <person name="Barrell B.G."/>
        </authorList>
    </citation>
    <scope>NUCLEOTIDE SEQUENCE [LARGE SCALE GENOMIC DNA]</scope>
    <source>
        <strain>ATCC 25618 / H37Rv</strain>
    </source>
</reference>
<reference key="2">
    <citation type="submission" date="2013-11" db="EMBL/GenBank/DDBJ databases">
        <title>The genome sequence of Mycobacterium tuberculosis H37Rv.</title>
        <authorList>
            <consortium name="The Broad Institute Genome Sequencing Platform"/>
            <person name="Galagan J."/>
            <person name="Kreiswirth B."/>
            <person name="Dobos K."/>
            <person name="Fortune S."/>
            <person name="Fitzgerald M."/>
            <person name="Young S.K."/>
            <person name="Zeng Q."/>
            <person name="Gargeya S."/>
            <person name="Abouelleil A."/>
            <person name="Alvarado L."/>
            <person name="Berlin A.M."/>
            <person name="Chapman S.B."/>
            <person name="Gainer-Dewar J."/>
            <person name="Goldberg J."/>
            <person name="Gnerre S."/>
            <person name="Griggs A."/>
            <person name="Gujja S."/>
            <person name="Hansen M."/>
            <person name="Howarth C."/>
            <person name="Imamovic A."/>
            <person name="Larimer J."/>
            <person name="McCowan C."/>
            <person name="Murphy C."/>
            <person name="Pearson M."/>
            <person name="Poon T."/>
            <person name="Priest M."/>
            <person name="Roberts A."/>
            <person name="Saif S."/>
            <person name="Shea T."/>
            <person name="Sykes S."/>
            <person name="Wortman J."/>
            <person name="Nusbaum C."/>
            <person name="Birren B."/>
        </authorList>
    </citation>
    <scope>NUCLEOTIDE SEQUENCE [LARGE SCALE GENOMIC DNA]</scope>
    <source>
        <strain>ATCC 25618 / H37Rv</strain>
    </source>
</reference>
<reference key="3">
    <citation type="journal article" date="2011" name="Mol. Cell. Proteomics">
        <title>Proteogenomic analysis of Mycobacterium tuberculosis by high resolution mass spectrometry.</title>
        <authorList>
            <person name="Kelkar D.S."/>
            <person name="Kumar D."/>
            <person name="Kumar P."/>
            <person name="Balakrishnan L."/>
            <person name="Muthusamy B."/>
            <person name="Yadav A.K."/>
            <person name="Shrivastava P."/>
            <person name="Marimuthu A."/>
            <person name="Anand S."/>
            <person name="Sundaram H."/>
            <person name="Kingsbury R."/>
            <person name="Harsha H.C."/>
            <person name="Nair B."/>
            <person name="Prasad T.S."/>
            <person name="Chauhan D.S."/>
            <person name="Katoch K."/>
            <person name="Katoch V.M."/>
            <person name="Kumar P."/>
            <person name="Chaerkady R."/>
            <person name="Ramachandran S."/>
            <person name="Dash D."/>
            <person name="Pandey A."/>
        </authorList>
    </citation>
    <scope>IDENTIFICATION BY MASS SPECTROMETRY [LARGE SCALE ANALYSIS]</scope>
    <source>
        <strain>ATCC 25618 / H37Rv</strain>
    </source>
</reference>
<reference key="4">
    <citation type="journal article" date="2011" name="Protein Sci.">
        <title>Crystal structure of calcium dodecin (Rv0379), from Mycobacterium tuberculosis with a unique calcium-binding site.</title>
        <authorList>
            <person name="Arockiasamy A."/>
            <person name="Aggarwal A."/>
            <person name="Savva C.G."/>
            <person name="Holzenburg A."/>
            <person name="Sacchettini J.C."/>
        </authorList>
    </citation>
    <scope>X-RAY CRYSTALLOGRAPHY (1.80 ANGSTROMS) IN COMPLEX WITH CALCIUM IONS</scope>
    <scope>FUNCTION</scope>
    <scope>SUBUNIT</scope>
    <scope>ELECTRON MICROSCOPY</scope>
    <source>
        <strain>ATCC 25618 / H37Rv</strain>
    </source>
</reference>
<name>DODEC_MYCTU</name>
<gene>
    <name type="primary">secE2</name>
    <name type="ordered locus">Rv0379</name>
    <name type="ordered locus">RVBD_0379</name>
</gene>
<protein>
    <recommendedName>
        <fullName>Calcium dodecin</fullName>
    </recommendedName>
</protein>